<feature type="chain" id="PRO_0000387944" description="tRNA (guanine-N(7)-)-methyltransferase">
    <location>
        <begin position="1"/>
        <end position="224"/>
    </location>
</feature>
<feature type="binding site" evidence="1">
    <location>
        <position position="57"/>
    </location>
    <ligand>
        <name>S-adenosyl-L-methionine</name>
        <dbReference type="ChEBI" id="CHEBI:59789"/>
    </ligand>
</feature>
<feature type="binding site" evidence="1">
    <location>
        <position position="82"/>
    </location>
    <ligand>
        <name>S-adenosyl-L-methionine</name>
        <dbReference type="ChEBI" id="CHEBI:59789"/>
    </ligand>
</feature>
<feature type="binding site" evidence="1">
    <location>
        <position position="109"/>
    </location>
    <ligand>
        <name>S-adenosyl-L-methionine</name>
        <dbReference type="ChEBI" id="CHEBI:59789"/>
    </ligand>
</feature>
<feature type="binding site" evidence="1">
    <location>
        <position position="167"/>
    </location>
    <ligand>
        <name>substrate</name>
    </ligand>
</feature>
<accession>B9LBT1</accession>
<evidence type="ECO:0000255" key="1">
    <source>
        <dbReference type="HAMAP-Rule" id="MF_01057"/>
    </source>
</evidence>
<sequence>MGRGRYPARLYVTAPPPEIAARYYRSWPAKELYHTPEHFPPVSAEGLFGYNAPLTLEFGCATGEYLCALAAAQPSSCFVGIDIVAKPLYRAVERAVAGNLSNILFIHADARLIYQRIPTAALHSIILHFPPPLLRNRQRNQLLVSPQLLECAARTLVPGGYLSFLTDHPALFALMQELLPAFPALRATPASVEELAVFESHYHRRWAARGRTISGLRIERVMED</sequence>
<organism>
    <name type="scientific">Chloroflexus aurantiacus (strain ATCC 29364 / DSM 637 / Y-400-fl)</name>
    <dbReference type="NCBI Taxonomy" id="480224"/>
    <lineage>
        <taxon>Bacteria</taxon>
        <taxon>Bacillati</taxon>
        <taxon>Chloroflexota</taxon>
        <taxon>Chloroflexia</taxon>
        <taxon>Chloroflexales</taxon>
        <taxon>Chloroflexineae</taxon>
        <taxon>Chloroflexaceae</taxon>
        <taxon>Chloroflexus</taxon>
    </lineage>
</organism>
<keyword id="KW-0489">Methyltransferase</keyword>
<keyword id="KW-0949">S-adenosyl-L-methionine</keyword>
<keyword id="KW-0808">Transferase</keyword>
<keyword id="KW-0819">tRNA processing</keyword>
<gene>
    <name evidence="1" type="primary">trmB</name>
    <name type="ordered locus">Chy400_3349</name>
</gene>
<protein>
    <recommendedName>
        <fullName evidence="1">tRNA (guanine-N(7)-)-methyltransferase</fullName>
        <ecNumber evidence="1">2.1.1.33</ecNumber>
    </recommendedName>
    <alternativeName>
        <fullName evidence="1">tRNA (guanine(46)-N(7))-methyltransferase</fullName>
    </alternativeName>
    <alternativeName>
        <fullName evidence="1">tRNA(m7G46)-methyltransferase</fullName>
    </alternativeName>
</protein>
<name>TRMB_CHLSY</name>
<dbReference type="EC" id="2.1.1.33" evidence="1"/>
<dbReference type="EMBL" id="CP001364">
    <property type="protein sequence ID" value="ACM54726.1"/>
    <property type="molecule type" value="Genomic_DNA"/>
</dbReference>
<dbReference type="SMR" id="B9LBT1"/>
<dbReference type="KEGG" id="chl:Chy400_3349"/>
<dbReference type="HOGENOM" id="CLU_050910_2_0_0"/>
<dbReference type="OrthoDB" id="9802090at2"/>
<dbReference type="UniPathway" id="UPA00989"/>
<dbReference type="GO" id="GO:0043527">
    <property type="term" value="C:tRNA methyltransferase complex"/>
    <property type="evidence" value="ECO:0007669"/>
    <property type="project" value="TreeGrafter"/>
</dbReference>
<dbReference type="GO" id="GO:0008176">
    <property type="term" value="F:tRNA (guanine(46)-N7)-methyltransferase activity"/>
    <property type="evidence" value="ECO:0007669"/>
    <property type="project" value="UniProtKB-UniRule"/>
</dbReference>
<dbReference type="CDD" id="cd02440">
    <property type="entry name" value="AdoMet_MTases"/>
    <property type="match status" value="1"/>
</dbReference>
<dbReference type="Gene3D" id="3.40.50.150">
    <property type="entry name" value="Vaccinia Virus protein VP39"/>
    <property type="match status" value="1"/>
</dbReference>
<dbReference type="HAMAP" id="MF_01057">
    <property type="entry name" value="tRNA_methyltr_TrmB"/>
    <property type="match status" value="1"/>
</dbReference>
<dbReference type="InterPro" id="IPR029063">
    <property type="entry name" value="SAM-dependent_MTases_sf"/>
</dbReference>
<dbReference type="InterPro" id="IPR003358">
    <property type="entry name" value="tRNA_(Gua-N-7)_MeTrfase_Trmb"/>
</dbReference>
<dbReference type="InterPro" id="IPR055361">
    <property type="entry name" value="tRNA_methyltr_TrmB_bact"/>
</dbReference>
<dbReference type="PANTHER" id="PTHR23417">
    <property type="entry name" value="3-DEOXY-D-MANNO-OCTULOSONIC-ACID TRANSFERASE/TRNA GUANINE-N 7 - -METHYLTRANSFERASE"/>
    <property type="match status" value="1"/>
</dbReference>
<dbReference type="PANTHER" id="PTHR23417:SF14">
    <property type="entry name" value="PENTACOTRIPEPTIDE-REPEAT REGION OF PRORP DOMAIN-CONTAINING PROTEIN"/>
    <property type="match status" value="1"/>
</dbReference>
<dbReference type="Pfam" id="PF02390">
    <property type="entry name" value="Methyltransf_4"/>
    <property type="match status" value="1"/>
</dbReference>
<dbReference type="SUPFAM" id="SSF53335">
    <property type="entry name" value="S-adenosyl-L-methionine-dependent methyltransferases"/>
    <property type="match status" value="1"/>
</dbReference>
<dbReference type="PROSITE" id="PS51625">
    <property type="entry name" value="SAM_MT_TRMB"/>
    <property type="match status" value="1"/>
</dbReference>
<proteinExistence type="inferred from homology"/>
<reference key="1">
    <citation type="submission" date="2009-01" db="EMBL/GenBank/DDBJ databases">
        <title>Complete sequence of Chloroflexus sp. Y-400-fl.</title>
        <authorList>
            <consortium name="US DOE Joint Genome Institute"/>
            <person name="Lucas S."/>
            <person name="Copeland A."/>
            <person name="Lapidus A."/>
            <person name="Glavina del Rio T."/>
            <person name="Dalin E."/>
            <person name="Tice H."/>
            <person name="Bruce D."/>
            <person name="Goodwin L."/>
            <person name="Pitluck S."/>
            <person name="Sims D."/>
            <person name="Kiss H."/>
            <person name="Brettin T."/>
            <person name="Detter J.C."/>
            <person name="Han C."/>
            <person name="Larimer F."/>
            <person name="Land M."/>
            <person name="Hauser L."/>
            <person name="Kyrpides N."/>
            <person name="Ovchinnikova G."/>
            <person name="Bryant D.A."/>
            <person name="Richardson P."/>
        </authorList>
    </citation>
    <scope>NUCLEOTIDE SEQUENCE [LARGE SCALE GENOMIC DNA]</scope>
    <source>
        <strain>ATCC 29364 / DSM 637 / Y-400-fl</strain>
    </source>
</reference>
<comment type="function">
    <text evidence="1">Catalyzes the formation of N(7)-methylguanine at position 46 (m7G46) in tRNA.</text>
</comment>
<comment type="catalytic activity">
    <reaction evidence="1">
        <text>guanosine(46) in tRNA + S-adenosyl-L-methionine = N(7)-methylguanosine(46) in tRNA + S-adenosyl-L-homocysteine</text>
        <dbReference type="Rhea" id="RHEA:42708"/>
        <dbReference type="Rhea" id="RHEA-COMP:10188"/>
        <dbReference type="Rhea" id="RHEA-COMP:10189"/>
        <dbReference type="ChEBI" id="CHEBI:57856"/>
        <dbReference type="ChEBI" id="CHEBI:59789"/>
        <dbReference type="ChEBI" id="CHEBI:74269"/>
        <dbReference type="ChEBI" id="CHEBI:74480"/>
        <dbReference type="EC" id="2.1.1.33"/>
    </reaction>
</comment>
<comment type="pathway">
    <text evidence="1">tRNA modification; N(7)-methylguanine-tRNA biosynthesis.</text>
</comment>
<comment type="similarity">
    <text evidence="1">Belongs to the class I-like SAM-binding methyltransferase superfamily. TrmB family.</text>
</comment>